<protein>
    <recommendedName>
        <fullName>Outer membrane usher protein HifC</fullName>
    </recommendedName>
</protein>
<feature type="signal peptide" evidence="2">
    <location>
        <begin position="1"/>
        <end position="26"/>
    </location>
</feature>
<feature type="chain" id="PRO_0000009316" description="Outer membrane usher protein HifC">
    <location>
        <begin position="27"/>
        <end position="837"/>
    </location>
</feature>
<feature type="disulfide bond" evidence="2">
    <location>
        <begin position="813"/>
        <end position="833"/>
    </location>
</feature>
<accession>P33397</accession>
<organism>
    <name type="scientific">Haemophilus influenzae</name>
    <dbReference type="NCBI Taxonomy" id="727"/>
    <lineage>
        <taxon>Bacteria</taxon>
        <taxon>Pseudomonadati</taxon>
        <taxon>Pseudomonadota</taxon>
        <taxon>Gammaproteobacteria</taxon>
        <taxon>Pasteurellales</taxon>
        <taxon>Pasteurellaceae</taxon>
        <taxon>Haemophilus</taxon>
    </lineage>
</organism>
<name>HIFC1_HAEIF</name>
<sequence length="837" mass="92733">MKTKNFPLNKIAFACTLLLANPVAWAEDQFDASLWGGGSVLGIDFARFNVKNAVLPGRYEAQIYVNNEEKGESDIIFADNPATGRAELCFTPKLQEMLDLMDEAIVKSPNSEDDTCVFASDAIPKGTFDYQGGDMKLKLEIPQALTIRRPRGYIAPSRWQTGTNAAFANYDINYYRSGNPEVKSESLYVGLRGGVNFGNWALRHNGSFSRFENQSSSGFTDKGKNHYERGDTYLQRDFALLRGNVTVGDFFSTARIGENFGLRGLRIASDDRMLAPSQRGFAPVVRGVANTNAKVSIKQNGYTIYQITVPAGPFVINDLYASGYSGDLTVEIQESDGKVRSFIVPFSNLAPLMRVGHLRYQLAGGRYRIDSRTFDERVLQGVLQYGLTNHLTLNSSLLYTRHYRAGLFGFGLNTPIGAFSADATWSHAEFPLKKVSKNGYSLHGSYSINFNEIGTNLTLAAYRYSSRDFYTLSDTIGLNRTFRQFSGAYLPEIYRPKNQFQVSLSQSLGNWGNLYLSGQTYNYWEKRGTNTQYQVAYSNSFHILNYSVNLSQSIDKETGKRDNSIYLSLSLPLGDNHSADSSYSRSGNDINQRLGVNGSFGERHQWSYGINASRNNQGYRSYDGNLSHNNSIGSYRASYSRDSLKNRSTSLGVSGAVVAHKYGITLSQPVGESFAIIHAKDAAGAKVESGANVSLDYFGNAVVPYTSPYEINYIGINPSDAEANVEFEATERQIIPRANSISLVDFRTGKNTMVLFNLTLPNGEPVPMASTAQDSEGAFVGDVVQGGVLFANKLTQPKGELIVKWGERESEQCRFHYQVDLDNAQIQNHDIQCKTAE</sequence>
<proteinExistence type="inferred from homology"/>
<evidence type="ECO:0000250" key="1"/>
<evidence type="ECO:0000255" key="2"/>
<evidence type="ECO:0000305" key="3"/>
<comment type="function">
    <text>Essential for piliation.</text>
</comment>
<comment type="subcellular location">
    <subcellularLocation>
        <location evidence="1">Cell outer membrane</location>
        <topology evidence="1">Multi-pass membrane protein</topology>
    </subcellularLocation>
</comment>
<comment type="similarity">
    <text evidence="3">Belongs to the fimbrial export usher family.</text>
</comment>
<comment type="caution">
    <text evidence="3">It is uncertain whether Met-1 or Met-97 is the initiator.</text>
</comment>
<keyword id="KW-0998">Cell outer membrane</keyword>
<keyword id="KW-1015">Disulfide bond</keyword>
<keyword id="KW-1029">Fimbrium biogenesis</keyword>
<keyword id="KW-0472">Membrane</keyword>
<keyword id="KW-0732">Signal</keyword>
<keyword id="KW-0812">Transmembrane</keyword>
<keyword id="KW-1134">Transmembrane beta strand</keyword>
<keyword id="KW-0813">Transport</keyword>
<reference key="1">
    <citation type="journal article" date="1994" name="Infect. Immun.">
        <title>Identification of a gene essential for piliation in Haemophilus influenzae type b with homology to the pilus assembly platform genes of Gram-negative bacteria.</title>
        <authorList>
            <person name="Watson W.J."/>
            <person name="Gilsdorf J.R."/>
            <person name="Tucci M.A."/>
            <person name="McCrea K.W."/>
            <person name="Forney L.J."/>
            <person name="Marrs C.F."/>
        </authorList>
    </citation>
    <scope>NUCLEOTIDE SEQUENCE [GENOMIC DNA]</scope>
    <source>
        <strain>Eagan / Serotype B</strain>
    </source>
</reference>
<dbReference type="EMBL" id="U02932">
    <property type="protein sequence ID" value="AAB53096.1"/>
    <property type="molecule type" value="Unassigned_DNA"/>
</dbReference>
<dbReference type="SMR" id="P33397"/>
<dbReference type="GO" id="GO:0009279">
    <property type="term" value="C:cell outer membrane"/>
    <property type="evidence" value="ECO:0007669"/>
    <property type="project" value="UniProtKB-SubCell"/>
</dbReference>
<dbReference type="GO" id="GO:0015473">
    <property type="term" value="F:fimbrial usher porin activity"/>
    <property type="evidence" value="ECO:0007669"/>
    <property type="project" value="InterPro"/>
</dbReference>
<dbReference type="GO" id="GO:0009297">
    <property type="term" value="P:pilus assembly"/>
    <property type="evidence" value="ECO:0007669"/>
    <property type="project" value="InterPro"/>
</dbReference>
<dbReference type="FunFam" id="2.60.40.3110:FF:000001">
    <property type="entry name" value="Putative fimbrial outer membrane usher"/>
    <property type="match status" value="1"/>
</dbReference>
<dbReference type="Gene3D" id="2.60.40.2070">
    <property type="match status" value="1"/>
</dbReference>
<dbReference type="Gene3D" id="2.60.40.3110">
    <property type="match status" value="1"/>
</dbReference>
<dbReference type="Gene3D" id="3.10.20.410">
    <property type="match status" value="1"/>
</dbReference>
<dbReference type="Gene3D" id="2.60.40.2610">
    <property type="entry name" value="Outer membrane usher protein FimD, plug domain"/>
    <property type="match status" value="1"/>
</dbReference>
<dbReference type="InterPro" id="IPR000015">
    <property type="entry name" value="Fimb_usher"/>
</dbReference>
<dbReference type="InterPro" id="IPR018030">
    <property type="entry name" value="Fimbrial_membr_usher_CS"/>
</dbReference>
<dbReference type="InterPro" id="IPR042186">
    <property type="entry name" value="FimD_plug_dom"/>
</dbReference>
<dbReference type="InterPro" id="IPR025949">
    <property type="entry name" value="PapC-like_C"/>
</dbReference>
<dbReference type="InterPro" id="IPR043142">
    <property type="entry name" value="PapC-like_C_sf"/>
</dbReference>
<dbReference type="InterPro" id="IPR025885">
    <property type="entry name" value="PapC_N"/>
</dbReference>
<dbReference type="InterPro" id="IPR037224">
    <property type="entry name" value="PapC_N_sf"/>
</dbReference>
<dbReference type="PANTHER" id="PTHR30451">
    <property type="entry name" value="OUTER MEMBRANE USHER PROTEIN"/>
    <property type="match status" value="1"/>
</dbReference>
<dbReference type="PANTHER" id="PTHR30451:SF5">
    <property type="entry name" value="SLR0019 PROTEIN"/>
    <property type="match status" value="1"/>
</dbReference>
<dbReference type="Pfam" id="PF13953">
    <property type="entry name" value="PapC_C"/>
    <property type="match status" value="1"/>
</dbReference>
<dbReference type="Pfam" id="PF13954">
    <property type="entry name" value="PapC_N"/>
    <property type="match status" value="1"/>
</dbReference>
<dbReference type="Pfam" id="PF00577">
    <property type="entry name" value="Usher"/>
    <property type="match status" value="1"/>
</dbReference>
<dbReference type="SUPFAM" id="SSF141729">
    <property type="entry name" value="FimD N-terminal domain-like"/>
    <property type="match status" value="1"/>
</dbReference>
<dbReference type="PROSITE" id="PS01151">
    <property type="entry name" value="FIMBRIAL_USHER"/>
    <property type="match status" value="1"/>
</dbReference>
<gene>
    <name type="primary">hifC</name>
</gene>